<comment type="function">
    <text evidence="1">Catalyzes the reversible adenylation of nicotinate mononucleotide (NaMN) to nicotinic acid adenine dinucleotide (NaAD).</text>
</comment>
<comment type="catalytic activity">
    <reaction evidence="1">
        <text>nicotinate beta-D-ribonucleotide + ATP + H(+) = deamido-NAD(+) + diphosphate</text>
        <dbReference type="Rhea" id="RHEA:22860"/>
        <dbReference type="ChEBI" id="CHEBI:15378"/>
        <dbReference type="ChEBI" id="CHEBI:30616"/>
        <dbReference type="ChEBI" id="CHEBI:33019"/>
        <dbReference type="ChEBI" id="CHEBI:57502"/>
        <dbReference type="ChEBI" id="CHEBI:58437"/>
        <dbReference type="EC" id="2.7.7.18"/>
    </reaction>
</comment>
<comment type="pathway">
    <text evidence="1">Cofactor biosynthesis; NAD(+) biosynthesis; deamido-NAD(+) from nicotinate D-ribonucleotide: step 1/1.</text>
</comment>
<comment type="similarity">
    <text evidence="1">Belongs to the NadD family.</text>
</comment>
<sequence>MKKIVLYGGQFNPIHTAHMIVASEVFHELQPDEFYFLPSFMSPLKKHHDFIDVQHRLTMIQMIIDELGFGDICDDEIKRGGQSYTYDTIKAFKEQHKDSELYFVIGTDQYNQLEKWYQIEYLKEMVTFVVVNRDKNSQNVENAMIAIQIPRVDISSTMIRQRVSEGKSIQVLVPKSVENYIKGEGLYEH</sequence>
<dbReference type="EC" id="2.7.7.18" evidence="1"/>
<dbReference type="EMBL" id="CP000255">
    <property type="protein sequence ID" value="ABD21452.1"/>
    <property type="molecule type" value="Genomic_DNA"/>
</dbReference>
<dbReference type="RefSeq" id="WP_000725162.1">
    <property type="nucleotide sequence ID" value="NZ_CP027476.1"/>
</dbReference>
<dbReference type="SMR" id="Q2FGD0"/>
<dbReference type="KEGG" id="saa:SAUSA300_1553"/>
<dbReference type="HOGENOM" id="CLU_069765_3_1_9"/>
<dbReference type="OMA" id="WIMGADS"/>
<dbReference type="UniPathway" id="UPA00253">
    <property type="reaction ID" value="UER00332"/>
</dbReference>
<dbReference type="Proteomes" id="UP000001939">
    <property type="component" value="Chromosome"/>
</dbReference>
<dbReference type="GO" id="GO:0005524">
    <property type="term" value="F:ATP binding"/>
    <property type="evidence" value="ECO:0007669"/>
    <property type="project" value="UniProtKB-KW"/>
</dbReference>
<dbReference type="GO" id="GO:0004515">
    <property type="term" value="F:nicotinate-nucleotide adenylyltransferase activity"/>
    <property type="evidence" value="ECO:0007669"/>
    <property type="project" value="UniProtKB-UniRule"/>
</dbReference>
<dbReference type="GO" id="GO:0009435">
    <property type="term" value="P:NAD biosynthetic process"/>
    <property type="evidence" value="ECO:0007669"/>
    <property type="project" value="UniProtKB-UniRule"/>
</dbReference>
<dbReference type="CDD" id="cd02165">
    <property type="entry name" value="NMNAT"/>
    <property type="match status" value="1"/>
</dbReference>
<dbReference type="FunFam" id="3.40.50.620:FF:000189">
    <property type="entry name" value="Probable nicotinate-nucleotide adenylyltransferase"/>
    <property type="match status" value="1"/>
</dbReference>
<dbReference type="Gene3D" id="3.40.50.620">
    <property type="entry name" value="HUPs"/>
    <property type="match status" value="1"/>
</dbReference>
<dbReference type="HAMAP" id="MF_00244">
    <property type="entry name" value="NaMN_adenylyltr"/>
    <property type="match status" value="1"/>
</dbReference>
<dbReference type="InterPro" id="IPR004821">
    <property type="entry name" value="Cyt_trans-like"/>
</dbReference>
<dbReference type="InterPro" id="IPR005248">
    <property type="entry name" value="NadD/NMNAT"/>
</dbReference>
<dbReference type="InterPro" id="IPR014729">
    <property type="entry name" value="Rossmann-like_a/b/a_fold"/>
</dbReference>
<dbReference type="NCBIfam" id="TIGR00482">
    <property type="entry name" value="nicotinate (nicotinamide) nucleotide adenylyltransferase"/>
    <property type="match status" value="1"/>
</dbReference>
<dbReference type="NCBIfam" id="NF000840">
    <property type="entry name" value="PRK00071.1-3"/>
    <property type="match status" value="1"/>
</dbReference>
<dbReference type="NCBIfam" id="NF000841">
    <property type="entry name" value="PRK00071.1-4"/>
    <property type="match status" value="1"/>
</dbReference>
<dbReference type="PANTHER" id="PTHR39321">
    <property type="entry name" value="NICOTINATE-NUCLEOTIDE ADENYLYLTRANSFERASE-RELATED"/>
    <property type="match status" value="1"/>
</dbReference>
<dbReference type="PANTHER" id="PTHR39321:SF3">
    <property type="entry name" value="PHOSPHOPANTETHEINE ADENYLYLTRANSFERASE"/>
    <property type="match status" value="1"/>
</dbReference>
<dbReference type="Pfam" id="PF01467">
    <property type="entry name" value="CTP_transf_like"/>
    <property type="match status" value="1"/>
</dbReference>
<dbReference type="SUPFAM" id="SSF52374">
    <property type="entry name" value="Nucleotidylyl transferase"/>
    <property type="match status" value="1"/>
</dbReference>
<proteinExistence type="inferred from homology"/>
<reference key="1">
    <citation type="journal article" date="2006" name="Lancet">
        <title>Complete genome sequence of USA300, an epidemic clone of community-acquired meticillin-resistant Staphylococcus aureus.</title>
        <authorList>
            <person name="Diep B.A."/>
            <person name="Gill S.R."/>
            <person name="Chang R.F."/>
            <person name="Phan T.H."/>
            <person name="Chen J.H."/>
            <person name="Davidson M.G."/>
            <person name="Lin F."/>
            <person name="Lin J."/>
            <person name="Carleton H.A."/>
            <person name="Mongodin E.F."/>
            <person name="Sensabaugh G.F."/>
            <person name="Perdreau-Remington F."/>
        </authorList>
    </citation>
    <scope>NUCLEOTIDE SEQUENCE [LARGE SCALE GENOMIC DNA]</scope>
    <source>
        <strain>USA300</strain>
    </source>
</reference>
<evidence type="ECO:0000255" key="1">
    <source>
        <dbReference type="HAMAP-Rule" id="MF_00244"/>
    </source>
</evidence>
<gene>
    <name evidence="1" type="primary">nadD</name>
    <name type="ordered locus">SAUSA300_1553</name>
</gene>
<name>NADD_STAA3</name>
<feature type="chain" id="PRO_0000310152" description="Probable nicotinate-nucleotide adenylyltransferase">
    <location>
        <begin position="1"/>
        <end position="189"/>
    </location>
</feature>
<organism>
    <name type="scientific">Staphylococcus aureus (strain USA300)</name>
    <dbReference type="NCBI Taxonomy" id="367830"/>
    <lineage>
        <taxon>Bacteria</taxon>
        <taxon>Bacillati</taxon>
        <taxon>Bacillota</taxon>
        <taxon>Bacilli</taxon>
        <taxon>Bacillales</taxon>
        <taxon>Staphylococcaceae</taxon>
        <taxon>Staphylococcus</taxon>
    </lineage>
</organism>
<keyword id="KW-0067">ATP-binding</keyword>
<keyword id="KW-0520">NAD</keyword>
<keyword id="KW-0547">Nucleotide-binding</keyword>
<keyword id="KW-0548">Nucleotidyltransferase</keyword>
<keyword id="KW-0662">Pyridine nucleotide biosynthesis</keyword>
<keyword id="KW-0808">Transferase</keyword>
<accession>Q2FGD0</accession>
<protein>
    <recommendedName>
        <fullName evidence="1">Probable nicotinate-nucleotide adenylyltransferase</fullName>
        <ecNumber evidence="1">2.7.7.18</ecNumber>
    </recommendedName>
    <alternativeName>
        <fullName evidence="1">Deamido-NAD(+) diphosphorylase</fullName>
    </alternativeName>
    <alternativeName>
        <fullName evidence="1">Deamido-NAD(+) pyrophosphorylase</fullName>
    </alternativeName>
    <alternativeName>
        <fullName evidence="1">Nicotinate mononucleotide adenylyltransferase</fullName>
        <shortName evidence="1">NaMN adenylyltransferase</shortName>
    </alternativeName>
</protein>